<comment type="function">
    <text evidence="1">One of the primary rRNA binding proteins, this protein initially binds near the 5'-end of the 23S rRNA. It is important during the early stages of 50S assembly. It makes multiple contacts with different domains of the 23S rRNA in the assembled 50S subunit and ribosome.</text>
</comment>
<comment type="function">
    <text evidence="1">Forms part of the polypeptide exit tunnel.</text>
</comment>
<comment type="subunit">
    <text evidence="1">Part of the 50S ribosomal subunit.</text>
</comment>
<comment type="similarity">
    <text evidence="1">Belongs to the universal ribosomal protein uL4 family.</text>
</comment>
<proteinExistence type="inferred from homology"/>
<dbReference type="EMBL" id="CP000813">
    <property type="protein sequence ID" value="ABV60803.1"/>
    <property type="molecule type" value="Genomic_DNA"/>
</dbReference>
<dbReference type="RefSeq" id="WP_003217216.1">
    <property type="nucleotide sequence ID" value="NZ_VEIS01000020.1"/>
</dbReference>
<dbReference type="SMR" id="A8F986"/>
<dbReference type="STRING" id="315750.BPUM_0103"/>
<dbReference type="GeneID" id="5619345"/>
<dbReference type="KEGG" id="bpu:BPUM_0103"/>
<dbReference type="eggNOG" id="COG0088">
    <property type="taxonomic scope" value="Bacteria"/>
</dbReference>
<dbReference type="HOGENOM" id="CLU_041575_5_2_9"/>
<dbReference type="OrthoDB" id="9803201at2"/>
<dbReference type="Proteomes" id="UP000001355">
    <property type="component" value="Chromosome"/>
</dbReference>
<dbReference type="GO" id="GO:1990904">
    <property type="term" value="C:ribonucleoprotein complex"/>
    <property type="evidence" value="ECO:0007669"/>
    <property type="project" value="UniProtKB-KW"/>
</dbReference>
<dbReference type="GO" id="GO:0005840">
    <property type="term" value="C:ribosome"/>
    <property type="evidence" value="ECO:0007669"/>
    <property type="project" value="UniProtKB-KW"/>
</dbReference>
<dbReference type="GO" id="GO:0019843">
    <property type="term" value="F:rRNA binding"/>
    <property type="evidence" value="ECO:0007669"/>
    <property type="project" value="UniProtKB-UniRule"/>
</dbReference>
<dbReference type="GO" id="GO:0003735">
    <property type="term" value="F:structural constituent of ribosome"/>
    <property type="evidence" value="ECO:0007669"/>
    <property type="project" value="InterPro"/>
</dbReference>
<dbReference type="GO" id="GO:0006412">
    <property type="term" value="P:translation"/>
    <property type="evidence" value="ECO:0007669"/>
    <property type="project" value="UniProtKB-UniRule"/>
</dbReference>
<dbReference type="FunFam" id="3.40.1370.10:FF:000003">
    <property type="entry name" value="50S ribosomal protein L4"/>
    <property type="match status" value="1"/>
</dbReference>
<dbReference type="Gene3D" id="3.40.1370.10">
    <property type="match status" value="1"/>
</dbReference>
<dbReference type="HAMAP" id="MF_01328_B">
    <property type="entry name" value="Ribosomal_uL4_B"/>
    <property type="match status" value="1"/>
</dbReference>
<dbReference type="InterPro" id="IPR002136">
    <property type="entry name" value="Ribosomal_uL4"/>
</dbReference>
<dbReference type="InterPro" id="IPR013005">
    <property type="entry name" value="Ribosomal_uL4-like"/>
</dbReference>
<dbReference type="InterPro" id="IPR023574">
    <property type="entry name" value="Ribosomal_uL4_dom_sf"/>
</dbReference>
<dbReference type="NCBIfam" id="TIGR03953">
    <property type="entry name" value="rplD_bact"/>
    <property type="match status" value="1"/>
</dbReference>
<dbReference type="PANTHER" id="PTHR10746">
    <property type="entry name" value="50S RIBOSOMAL PROTEIN L4"/>
    <property type="match status" value="1"/>
</dbReference>
<dbReference type="PANTHER" id="PTHR10746:SF6">
    <property type="entry name" value="LARGE RIBOSOMAL SUBUNIT PROTEIN UL4M"/>
    <property type="match status" value="1"/>
</dbReference>
<dbReference type="Pfam" id="PF00573">
    <property type="entry name" value="Ribosomal_L4"/>
    <property type="match status" value="1"/>
</dbReference>
<dbReference type="SUPFAM" id="SSF52166">
    <property type="entry name" value="Ribosomal protein L4"/>
    <property type="match status" value="1"/>
</dbReference>
<gene>
    <name evidence="1" type="primary">rplD</name>
    <name type="ordered locus">BPUM_0103</name>
</gene>
<sequence length="207" mass="22421">MPKVALFNQNGSTNGEIELNASVFGIEPNESVVFDAILMQRASLRQGTHKVKTRSEVRGGGRKPWRQKGTGRARQGSIRSPQWRGGGIVFGPTPRSYSYKLPKKVRRLAIKSVLSSKVIDNNIIVLEDLTLDAVKTKEFAGILKGLSVEKKALIVTADANETVALSARNIPGVTVVEANGINVLDVVNHEKLLITKAAVEKVEEGLA</sequence>
<accession>A8F986</accession>
<evidence type="ECO:0000255" key="1">
    <source>
        <dbReference type="HAMAP-Rule" id="MF_01328"/>
    </source>
</evidence>
<evidence type="ECO:0000256" key="2">
    <source>
        <dbReference type="SAM" id="MobiDB-lite"/>
    </source>
</evidence>
<evidence type="ECO:0000305" key="3"/>
<keyword id="KW-0687">Ribonucleoprotein</keyword>
<keyword id="KW-0689">Ribosomal protein</keyword>
<keyword id="KW-0694">RNA-binding</keyword>
<keyword id="KW-0699">rRNA-binding</keyword>
<reference key="1">
    <citation type="journal article" date="2007" name="PLoS ONE">
        <title>Paradoxical DNA repair and peroxide resistance gene conservation in Bacillus pumilus SAFR-032.</title>
        <authorList>
            <person name="Gioia J."/>
            <person name="Yerrapragada S."/>
            <person name="Qin X."/>
            <person name="Jiang H."/>
            <person name="Igboeli O.C."/>
            <person name="Muzny D."/>
            <person name="Dugan-Rocha S."/>
            <person name="Ding Y."/>
            <person name="Hawes A."/>
            <person name="Liu W."/>
            <person name="Perez L."/>
            <person name="Kovar C."/>
            <person name="Dinh H."/>
            <person name="Lee S."/>
            <person name="Nazareth L."/>
            <person name="Blyth P."/>
            <person name="Holder M."/>
            <person name="Buhay C."/>
            <person name="Tirumalai M.R."/>
            <person name="Liu Y."/>
            <person name="Dasgupta I."/>
            <person name="Bokhetache L."/>
            <person name="Fujita M."/>
            <person name="Karouia F."/>
            <person name="Eswara Moorthy P."/>
            <person name="Siefert J."/>
            <person name="Uzman A."/>
            <person name="Buzumbo P."/>
            <person name="Verma A."/>
            <person name="Zwiya H."/>
            <person name="McWilliams B.D."/>
            <person name="Olowu A."/>
            <person name="Clinkenbeard K.D."/>
            <person name="Newcombe D."/>
            <person name="Golebiewski L."/>
            <person name="Petrosino J.F."/>
            <person name="Nicholson W.L."/>
            <person name="Fox G.E."/>
            <person name="Venkateswaran K."/>
            <person name="Highlander S.K."/>
            <person name="Weinstock G.M."/>
        </authorList>
    </citation>
    <scope>NUCLEOTIDE SEQUENCE [LARGE SCALE GENOMIC DNA]</scope>
    <source>
        <strain>SAFR-032</strain>
    </source>
</reference>
<protein>
    <recommendedName>
        <fullName evidence="1">Large ribosomal subunit protein uL4</fullName>
    </recommendedName>
    <alternativeName>
        <fullName evidence="3">50S ribosomal protein L4</fullName>
    </alternativeName>
</protein>
<feature type="chain" id="PRO_1000067591" description="Large ribosomal subunit protein uL4">
    <location>
        <begin position="1"/>
        <end position="207"/>
    </location>
</feature>
<feature type="region of interest" description="Disordered" evidence="2">
    <location>
        <begin position="48"/>
        <end position="78"/>
    </location>
</feature>
<feature type="compositionally biased region" description="Basic residues" evidence="2">
    <location>
        <begin position="60"/>
        <end position="71"/>
    </location>
</feature>
<name>RL4_BACP2</name>
<organism>
    <name type="scientific">Bacillus pumilus (strain SAFR-032)</name>
    <dbReference type="NCBI Taxonomy" id="315750"/>
    <lineage>
        <taxon>Bacteria</taxon>
        <taxon>Bacillati</taxon>
        <taxon>Bacillota</taxon>
        <taxon>Bacilli</taxon>
        <taxon>Bacillales</taxon>
        <taxon>Bacillaceae</taxon>
        <taxon>Bacillus</taxon>
    </lineage>
</organism>